<feature type="chain" id="PRO_0000172119" description="Putative pre-16S rRNA nuclease">
    <location>
        <begin position="1"/>
        <end position="145"/>
    </location>
</feature>
<comment type="function">
    <text evidence="1">Could be a nuclease involved in processing of the 5'-end of pre-16S rRNA.</text>
</comment>
<comment type="subcellular location">
    <subcellularLocation>
        <location evidence="1">Cytoplasm</location>
    </subcellularLocation>
</comment>
<comment type="similarity">
    <text evidence="1">Belongs to the YqgF nuclease family.</text>
</comment>
<sequence length="145" mass="16021">MALRLLLGFDYGTKQIGVAVGQVITGQARELCTLKAQNGVPDWNQVEALIKEWKPDAVVVGLPLNMDGTPSDMCLRAEKFARRLNGRYNLPFYTHDERLTTFEAKGERLVRGGQKGSYRDNPVDAIAAALLLQGWLDANAALFET</sequence>
<accession>Q9F4I8</accession>
<name>YQGF_PSEFL</name>
<evidence type="ECO:0000255" key="1">
    <source>
        <dbReference type="HAMAP-Rule" id="MF_00651"/>
    </source>
</evidence>
<organism>
    <name type="scientific">Pseudomonas fluorescens</name>
    <dbReference type="NCBI Taxonomy" id="294"/>
    <lineage>
        <taxon>Bacteria</taxon>
        <taxon>Pseudomonadati</taxon>
        <taxon>Pseudomonadota</taxon>
        <taxon>Gammaproteobacteria</taxon>
        <taxon>Pseudomonadales</taxon>
        <taxon>Pseudomonadaceae</taxon>
        <taxon>Pseudomonas</taxon>
    </lineage>
</organism>
<dbReference type="EC" id="3.1.-.-" evidence="1"/>
<dbReference type="EMBL" id="AY007523">
    <property type="protein sequence ID" value="AAG15556.1"/>
    <property type="molecule type" value="Genomic_DNA"/>
</dbReference>
<dbReference type="RefSeq" id="WP_003177497.1">
    <property type="nucleotide sequence ID" value="NZ_SMCJ01000004.1"/>
</dbReference>
<dbReference type="SMR" id="Q9F4I8"/>
<dbReference type="GeneID" id="98113946"/>
<dbReference type="eggNOG" id="COG0816">
    <property type="taxonomic scope" value="Bacteria"/>
</dbReference>
<dbReference type="OrthoDB" id="9796140at2"/>
<dbReference type="GO" id="GO:0005829">
    <property type="term" value="C:cytosol"/>
    <property type="evidence" value="ECO:0007669"/>
    <property type="project" value="TreeGrafter"/>
</dbReference>
<dbReference type="GO" id="GO:0004518">
    <property type="term" value="F:nuclease activity"/>
    <property type="evidence" value="ECO:0007669"/>
    <property type="project" value="UniProtKB-KW"/>
</dbReference>
<dbReference type="GO" id="GO:0000967">
    <property type="term" value="P:rRNA 5'-end processing"/>
    <property type="evidence" value="ECO:0007669"/>
    <property type="project" value="UniProtKB-UniRule"/>
</dbReference>
<dbReference type="CDD" id="cd16964">
    <property type="entry name" value="YqgF"/>
    <property type="match status" value="1"/>
</dbReference>
<dbReference type="Gene3D" id="3.30.420.140">
    <property type="entry name" value="YqgF/RNase H-like domain"/>
    <property type="match status" value="1"/>
</dbReference>
<dbReference type="HAMAP" id="MF_00651">
    <property type="entry name" value="Nuclease_YqgF"/>
    <property type="match status" value="1"/>
</dbReference>
<dbReference type="InterPro" id="IPR012337">
    <property type="entry name" value="RNaseH-like_sf"/>
</dbReference>
<dbReference type="InterPro" id="IPR005227">
    <property type="entry name" value="YqgF"/>
</dbReference>
<dbReference type="InterPro" id="IPR006641">
    <property type="entry name" value="YqgF/RNaseH-like_dom"/>
</dbReference>
<dbReference type="InterPro" id="IPR037027">
    <property type="entry name" value="YqgF/RNaseH-like_dom_sf"/>
</dbReference>
<dbReference type="NCBIfam" id="TIGR00250">
    <property type="entry name" value="RNAse_H_YqgF"/>
    <property type="match status" value="1"/>
</dbReference>
<dbReference type="PANTHER" id="PTHR33317">
    <property type="entry name" value="POLYNUCLEOTIDYL TRANSFERASE, RIBONUCLEASE H-LIKE SUPERFAMILY PROTEIN"/>
    <property type="match status" value="1"/>
</dbReference>
<dbReference type="PANTHER" id="PTHR33317:SF4">
    <property type="entry name" value="POLYNUCLEOTIDYL TRANSFERASE, RIBONUCLEASE H-LIKE SUPERFAMILY PROTEIN"/>
    <property type="match status" value="1"/>
</dbReference>
<dbReference type="Pfam" id="PF03652">
    <property type="entry name" value="RuvX"/>
    <property type="match status" value="1"/>
</dbReference>
<dbReference type="SMART" id="SM00732">
    <property type="entry name" value="YqgFc"/>
    <property type="match status" value="1"/>
</dbReference>
<dbReference type="SUPFAM" id="SSF53098">
    <property type="entry name" value="Ribonuclease H-like"/>
    <property type="match status" value="1"/>
</dbReference>
<proteinExistence type="inferred from homology"/>
<protein>
    <recommendedName>
        <fullName evidence="1">Putative pre-16S rRNA nuclease</fullName>
        <ecNumber evidence="1">3.1.-.-</ecNumber>
    </recommendedName>
</protein>
<reference key="1">
    <citation type="submission" date="2000-08" db="EMBL/GenBank/DDBJ databases">
        <title>The regulatory protein PyrR of Pseudomona fluorescens is required for competitive root colonization.</title>
        <authorList>
            <person name="Camacho-Carvajal M.M."/>
            <person name="Scheublin T."/>
            <person name="Lugtenberg B.J.J."/>
            <person name="Bloemberg G.V."/>
        </authorList>
    </citation>
    <scope>NUCLEOTIDE SEQUENCE [GENOMIC DNA]</scope>
    <source>
        <strain>WCS365</strain>
    </source>
</reference>
<keyword id="KW-0963">Cytoplasm</keyword>
<keyword id="KW-0378">Hydrolase</keyword>
<keyword id="KW-0540">Nuclease</keyword>
<keyword id="KW-0690">Ribosome biogenesis</keyword>